<proteinExistence type="inferred from homology"/>
<comment type="function">
    <text evidence="1">Fluoride-specific ion channel. Important for reducing fluoride concentration in the cell, thus reducing its toxicity.</text>
</comment>
<comment type="catalytic activity">
    <reaction evidence="1">
        <text>fluoride(in) = fluoride(out)</text>
        <dbReference type="Rhea" id="RHEA:76159"/>
        <dbReference type="ChEBI" id="CHEBI:17051"/>
    </reaction>
    <physiologicalReaction direction="left-to-right" evidence="1">
        <dbReference type="Rhea" id="RHEA:76160"/>
    </physiologicalReaction>
</comment>
<comment type="activity regulation">
    <text evidence="1">Na(+) is not transported, but it plays an essential structural role and its presence is essential for fluoride channel function.</text>
</comment>
<comment type="subcellular location">
    <subcellularLocation>
        <location evidence="1">Cell inner membrane</location>
        <topology evidence="1">Multi-pass membrane protein</topology>
    </subcellularLocation>
</comment>
<comment type="similarity">
    <text evidence="1">Belongs to the fluoride channel Fluc/FEX (TC 1.A.43) family.</text>
</comment>
<feature type="chain" id="PRO_1000026389" description="Fluoride-specific ion channel FluC">
    <location>
        <begin position="1"/>
        <end position="111"/>
    </location>
</feature>
<feature type="transmembrane region" description="Helical" evidence="1">
    <location>
        <begin position="2"/>
        <end position="22"/>
    </location>
</feature>
<feature type="transmembrane region" description="Helical" evidence="1">
    <location>
        <begin position="36"/>
        <end position="56"/>
    </location>
</feature>
<feature type="transmembrane region" description="Helical" evidence="1">
    <location>
        <begin position="71"/>
        <end position="91"/>
    </location>
</feature>
<feature type="binding site" evidence="1">
    <location>
        <position position="79"/>
    </location>
    <ligand>
        <name>Na(+)</name>
        <dbReference type="ChEBI" id="CHEBI:29101"/>
        <note>structural</note>
    </ligand>
</feature>
<feature type="binding site" evidence="1">
    <location>
        <position position="82"/>
    </location>
    <ligand>
        <name>Na(+)</name>
        <dbReference type="ChEBI" id="CHEBI:29101"/>
        <note>structural</note>
    </ligand>
</feature>
<evidence type="ECO:0000255" key="1">
    <source>
        <dbReference type="HAMAP-Rule" id="MF_00454"/>
    </source>
</evidence>
<dbReference type="EMBL" id="CP000437">
    <property type="protein sequence ID" value="ABI82170.1"/>
    <property type="molecule type" value="Genomic_DNA"/>
</dbReference>
<dbReference type="SMR" id="Q0BP14"/>
<dbReference type="KEGG" id="fth:FTH_0133"/>
<dbReference type="GO" id="GO:0005886">
    <property type="term" value="C:plasma membrane"/>
    <property type="evidence" value="ECO:0007669"/>
    <property type="project" value="UniProtKB-SubCell"/>
</dbReference>
<dbReference type="GO" id="GO:0062054">
    <property type="term" value="F:fluoride channel activity"/>
    <property type="evidence" value="ECO:0007669"/>
    <property type="project" value="UniProtKB-UniRule"/>
</dbReference>
<dbReference type="GO" id="GO:0046872">
    <property type="term" value="F:metal ion binding"/>
    <property type="evidence" value="ECO:0007669"/>
    <property type="project" value="UniProtKB-KW"/>
</dbReference>
<dbReference type="GO" id="GO:0140114">
    <property type="term" value="P:cellular detoxification of fluoride"/>
    <property type="evidence" value="ECO:0007669"/>
    <property type="project" value="UniProtKB-UniRule"/>
</dbReference>
<dbReference type="HAMAP" id="MF_00454">
    <property type="entry name" value="FluC"/>
    <property type="match status" value="1"/>
</dbReference>
<dbReference type="InterPro" id="IPR003691">
    <property type="entry name" value="FluC"/>
</dbReference>
<dbReference type="NCBIfam" id="TIGR00494">
    <property type="entry name" value="crcB"/>
    <property type="match status" value="1"/>
</dbReference>
<dbReference type="PANTHER" id="PTHR28259">
    <property type="entry name" value="FLUORIDE EXPORT PROTEIN 1-RELATED"/>
    <property type="match status" value="1"/>
</dbReference>
<dbReference type="PANTHER" id="PTHR28259:SF1">
    <property type="entry name" value="FLUORIDE EXPORT PROTEIN 1-RELATED"/>
    <property type="match status" value="1"/>
</dbReference>
<dbReference type="Pfam" id="PF02537">
    <property type="entry name" value="CRCB"/>
    <property type="match status" value="1"/>
</dbReference>
<keyword id="KW-0997">Cell inner membrane</keyword>
<keyword id="KW-1003">Cell membrane</keyword>
<keyword id="KW-0407">Ion channel</keyword>
<keyword id="KW-0406">Ion transport</keyword>
<keyword id="KW-0472">Membrane</keyword>
<keyword id="KW-0479">Metal-binding</keyword>
<keyword id="KW-0915">Sodium</keyword>
<keyword id="KW-0812">Transmembrane</keyword>
<keyword id="KW-1133">Transmembrane helix</keyword>
<keyword id="KW-0813">Transport</keyword>
<protein>
    <recommendedName>
        <fullName evidence="1">Fluoride-specific ion channel FluC</fullName>
    </recommendedName>
</protein>
<accession>Q0BP14</accession>
<organism>
    <name type="scientific">Francisella tularensis subsp. holarctica (strain OSU18)</name>
    <dbReference type="NCBI Taxonomy" id="393011"/>
    <lineage>
        <taxon>Bacteria</taxon>
        <taxon>Pseudomonadati</taxon>
        <taxon>Pseudomonadota</taxon>
        <taxon>Gammaproteobacteria</taxon>
        <taxon>Thiotrichales</taxon>
        <taxon>Francisellaceae</taxon>
        <taxon>Francisella</taxon>
    </lineage>
</organism>
<gene>
    <name evidence="1" type="primary">fluC</name>
    <name evidence="1" type="synonym">crcB</name>
    <name type="ordered locus">FTH_0133</name>
</gene>
<sequence length="111" mass="11911">MGLLLLLVGIGGGFGAMARFALTQATASISKQIPLGILLCNIIGSLIIGMMAAFLIETKLFNEDVSTYVRFLLVTGFLGGFTTFSSFSLDILNLLQRGEIFIAIGYIWLVS</sequence>
<reference key="1">
    <citation type="journal article" date="2006" name="J. Bacteriol.">
        <title>Chromosome rearrangement and diversification of Francisella tularensis revealed by the type B (OSU18) genome sequence.</title>
        <authorList>
            <person name="Petrosino J.F."/>
            <person name="Xiang Q."/>
            <person name="Karpathy S.E."/>
            <person name="Jiang H."/>
            <person name="Yerrapragada S."/>
            <person name="Liu Y."/>
            <person name="Gioia J."/>
            <person name="Hemphill L."/>
            <person name="Gonzalez A."/>
            <person name="Raghavan T.M."/>
            <person name="Uzman A."/>
            <person name="Fox G.E."/>
            <person name="Highlander S."/>
            <person name="Reichard M."/>
            <person name="Morton R.J."/>
            <person name="Clinkenbeard K.D."/>
            <person name="Weinstock G.M."/>
        </authorList>
    </citation>
    <scope>NUCLEOTIDE SEQUENCE [LARGE SCALE GENOMIC DNA]</scope>
    <source>
        <strain>OSU18</strain>
    </source>
</reference>
<name>FLUC_FRATO</name>